<feature type="chain" id="PRO_0000140309" description="Peptide methionine sulfoxide reductase MsrB">
    <location>
        <begin position="1"/>
        <end position="145"/>
    </location>
</feature>
<feature type="domain" description="MsrB" evidence="2">
    <location>
        <begin position="4"/>
        <end position="127"/>
    </location>
</feature>
<feature type="active site" description="Nucleophile" evidence="2">
    <location>
        <position position="116"/>
    </location>
</feature>
<sequence length="145" mass="16395">METSEELKQRIGDLSYEVTQHAATESPFTGEYDDFFEKGIYVDIVSGEVLFSSLDKFNSGCGWPAFSKPIENRMVINHDDSSYGMRRVEVKSREAGSHLGHVFSDGPKEAGGLRYCINSAALKFIPYEQMEKEGYAQWLTLFDET</sequence>
<name>MSRB_STRP6</name>
<evidence type="ECO:0000255" key="1">
    <source>
        <dbReference type="HAMAP-Rule" id="MF_01400"/>
    </source>
</evidence>
<evidence type="ECO:0000255" key="2">
    <source>
        <dbReference type="PROSITE-ProRule" id="PRU01126"/>
    </source>
</evidence>
<keyword id="KW-0560">Oxidoreductase</keyword>
<organism>
    <name type="scientific">Streptococcus pyogenes serotype M6 (strain ATCC BAA-946 / MGAS10394)</name>
    <dbReference type="NCBI Taxonomy" id="286636"/>
    <lineage>
        <taxon>Bacteria</taxon>
        <taxon>Bacillati</taxon>
        <taxon>Bacillota</taxon>
        <taxon>Bacilli</taxon>
        <taxon>Lactobacillales</taxon>
        <taxon>Streptococcaceae</taxon>
        <taxon>Streptococcus</taxon>
    </lineage>
</organism>
<dbReference type="EC" id="1.8.4.12" evidence="1"/>
<dbReference type="EMBL" id="CP000003">
    <property type="protein sequence ID" value="AAT86933.1"/>
    <property type="molecule type" value="Genomic_DNA"/>
</dbReference>
<dbReference type="RefSeq" id="WP_011184472.1">
    <property type="nucleotide sequence ID" value="NC_006086.1"/>
</dbReference>
<dbReference type="SMR" id="Q5XCD0"/>
<dbReference type="KEGG" id="spa:M6_Spy0798"/>
<dbReference type="HOGENOM" id="CLU_031040_8_5_9"/>
<dbReference type="Proteomes" id="UP000001167">
    <property type="component" value="Chromosome"/>
</dbReference>
<dbReference type="GO" id="GO:0005737">
    <property type="term" value="C:cytoplasm"/>
    <property type="evidence" value="ECO:0007669"/>
    <property type="project" value="TreeGrafter"/>
</dbReference>
<dbReference type="GO" id="GO:0033743">
    <property type="term" value="F:peptide-methionine (R)-S-oxide reductase activity"/>
    <property type="evidence" value="ECO:0007669"/>
    <property type="project" value="UniProtKB-UniRule"/>
</dbReference>
<dbReference type="GO" id="GO:0030091">
    <property type="term" value="P:protein repair"/>
    <property type="evidence" value="ECO:0007669"/>
    <property type="project" value="InterPro"/>
</dbReference>
<dbReference type="GO" id="GO:0006979">
    <property type="term" value="P:response to oxidative stress"/>
    <property type="evidence" value="ECO:0007669"/>
    <property type="project" value="InterPro"/>
</dbReference>
<dbReference type="FunFam" id="2.170.150.20:FF:000003">
    <property type="entry name" value="Peptide methionine sulfoxide reductase MsrB"/>
    <property type="match status" value="1"/>
</dbReference>
<dbReference type="Gene3D" id="2.170.150.20">
    <property type="entry name" value="Peptide methionine sulfoxide reductase"/>
    <property type="match status" value="1"/>
</dbReference>
<dbReference type="HAMAP" id="MF_01400">
    <property type="entry name" value="MsrB"/>
    <property type="match status" value="1"/>
</dbReference>
<dbReference type="InterPro" id="IPR028427">
    <property type="entry name" value="Met_Sox_Rdtase_MsrB"/>
</dbReference>
<dbReference type="InterPro" id="IPR002579">
    <property type="entry name" value="Met_Sox_Rdtase_MsrB_dom"/>
</dbReference>
<dbReference type="InterPro" id="IPR011057">
    <property type="entry name" value="Mss4-like_sf"/>
</dbReference>
<dbReference type="NCBIfam" id="TIGR00357">
    <property type="entry name" value="peptide-methionine (R)-S-oxide reductase MsrB"/>
    <property type="match status" value="1"/>
</dbReference>
<dbReference type="PANTHER" id="PTHR10173">
    <property type="entry name" value="METHIONINE SULFOXIDE REDUCTASE"/>
    <property type="match status" value="1"/>
</dbReference>
<dbReference type="PANTHER" id="PTHR10173:SF59">
    <property type="entry name" value="PEPTIDE METHIONINE SULFOXIDE REDUCTASE MSRA_MSRB"/>
    <property type="match status" value="1"/>
</dbReference>
<dbReference type="Pfam" id="PF01641">
    <property type="entry name" value="SelR"/>
    <property type="match status" value="1"/>
</dbReference>
<dbReference type="SUPFAM" id="SSF51316">
    <property type="entry name" value="Mss4-like"/>
    <property type="match status" value="1"/>
</dbReference>
<dbReference type="PROSITE" id="PS51790">
    <property type="entry name" value="MSRB"/>
    <property type="match status" value="1"/>
</dbReference>
<comment type="catalytic activity">
    <reaction evidence="1">
        <text>L-methionyl-[protein] + [thioredoxin]-disulfide + H2O = L-methionyl-(R)-S-oxide-[protein] + [thioredoxin]-dithiol</text>
        <dbReference type="Rhea" id="RHEA:24164"/>
        <dbReference type="Rhea" id="RHEA-COMP:10698"/>
        <dbReference type="Rhea" id="RHEA-COMP:10700"/>
        <dbReference type="Rhea" id="RHEA-COMP:12313"/>
        <dbReference type="Rhea" id="RHEA-COMP:12314"/>
        <dbReference type="ChEBI" id="CHEBI:15377"/>
        <dbReference type="ChEBI" id="CHEBI:16044"/>
        <dbReference type="ChEBI" id="CHEBI:29950"/>
        <dbReference type="ChEBI" id="CHEBI:45764"/>
        <dbReference type="ChEBI" id="CHEBI:50058"/>
        <dbReference type="EC" id="1.8.4.12"/>
    </reaction>
</comment>
<comment type="similarity">
    <text evidence="1">Belongs to the MsrB Met sulfoxide reductase family.</text>
</comment>
<reference key="1">
    <citation type="journal article" date="2004" name="J. Infect. Dis.">
        <title>Progress toward characterization of the group A Streptococcus metagenome: complete genome sequence of a macrolide-resistant serotype M6 strain.</title>
        <authorList>
            <person name="Banks D.J."/>
            <person name="Porcella S.F."/>
            <person name="Barbian K.D."/>
            <person name="Beres S.B."/>
            <person name="Philips L.E."/>
            <person name="Voyich J.M."/>
            <person name="DeLeo F.R."/>
            <person name="Martin J.M."/>
            <person name="Somerville G.A."/>
            <person name="Musser J.M."/>
        </authorList>
    </citation>
    <scope>NUCLEOTIDE SEQUENCE [LARGE SCALE GENOMIC DNA]</scope>
    <source>
        <strain>ATCC BAA-946 / MGAS10394</strain>
    </source>
</reference>
<accession>Q5XCD0</accession>
<proteinExistence type="inferred from homology"/>
<protein>
    <recommendedName>
        <fullName evidence="1">Peptide methionine sulfoxide reductase MsrB</fullName>
        <ecNumber evidence="1">1.8.4.12</ecNumber>
    </recommendedName>
    <alternativeName>
        <fullName evidence="1">Peptide-methionine (R)-S-oxide reductase</fullName>
    </alternativeName>
</protein>
<gene>
    <name evidence="1" type="primary">msrB</name>
    <name type="ordered locus">M6_Spy0798</name>
</gene>